<sequence>MAVKIRLKRMGAKKSPFYRIVVADSRSPRDGRFIETVGTYNPLAKPAEVKIDEELALKWLQTGAKPSDTVRNLFSKEGIMEKFHNAKQSK</sequence>
<reference key="1">
    <citation type="journal article" date="2004" name="J. Mol. Microbiol. Biotechnol.">
        <title>The complete genome sequence of Bacillus licheniformis DSM13, an organism with great industrial potential.</title>
        <authorList>
            <person name="Veith B."/>
            <person name="Herzberg C."/>
            <person name="Steckel S."/>
            <person name="Feesche J."/>
            <person name="Maurer K.H."/>
            <person name="Ehrenreich P."/>
            <person name="Baeumer S."/>
            <person name="Henne A."/>
            <person name="Liesegang H."/>
            <person name="Merkl R."/>
            <person name="Ehrenreich A."/>
            <person name="Gottschalk G."/>
        </authorList>
    </citation>
    <scope>NUCLEOTIDE SEQUENCE [LARGE SCALE GENOMIC DNA]</scope>
    <source>
        <strain>ATCC 14580 / DSM 13 / JCM 2505 / CCUG 7422 / NBRC 12200 / NCIMB 9375 / NCTC 10341 / NRRL NRS-1264 / Gibson 46</strain>
    </source>
</reference>
<reference key="2">
    <citation type="journal article" date="2004" name="Genome Biol.">
        <title>Complete genome sequence of the industrial bacterium Bacillus licheniformis and comparisons with closely related Bacillus species.</title>
        <authorList>
            <person name="Rey M.W."/>
            <person name="Ramaiya P."/>
            <person name="Nelson B.A."/>
            <person name="Brody-Karpin S.D."/>
            <person name="Zaretsky E.J."/>
            <person name="Tang M."/>
            <person name="Lopez de Leon A."/>
            <person name="Xiang H."/>
            <person name="Gusti V."/>
            <person name="Clausen I.G."/>
            <person name="Olsen P.B."/>
            <person name="Rasmussen M.D."/>
            <person name="Andersen J.T."/>
            <person name="Joergensen P.L."/>
            <person name="Larsen T.S."/>
            <person name="Sorokin A."/>
            <person name="Bolotin A."/>
            <person name="Lapidus A."/>
            <person name="Galleron N."/>
            <person name="Ehrlich S.D."/>
            <person name="Berka R.M."/>
        </authorList>
    </citation>
    <scope>NUCLEOTIDE SEQUENCE [LARGE SCALE GENOMIC DNA]</scope>
    <source>
        <strain>ATCC 14580 / DSM 13 / JCM 2505 / CCUG 7422 / NBRC 12200 / NCIMB 9375 / NCTC 10341 / NRRL NRS-1264 / Gibson 46</strain>
    </source>
</reference>
<dbReference type="EMBL" id="AE017333">
    <property type="protein sequence ID" value="AAU40714.1"/>
    <property type="molecule type" value="Genomic_DNA"/>
</dbReference>
<dbReference type="EMBL" id="CP000002">
    <property type="protein sequence ID" value="AAU23354.1"/>
    <property type="molecule type" value="Genomic_DNA"/>
</dbReference>
<dbReference type="RefSeq" id="WP_003181719.1">
    <property type="nucleotide sequence ID" value="NC_006322.1"/>
</dbReference>
<dbReference type="SMR" id="Q65JQ0"/>
<dbReference type="STRING" id="279010.BL02323"/>
<dbReference type="GeneID" id="92861588"/>
<dbReference type="KEGG" id="bld:BLi01819"/>
<dbReference type="KEGG" id="bli:BL02323"/>
<dbReference type="eggNOG" id="COG0228">
    <property type="taxonomic scope" value="Bacteria"/>
</dbReference>
<dbReference type="HOGENOM" id="CLU_100590_5_0_9"/>
<dbReference type="Proteomes" id="UP000000606">
    <property type="component" value="Chromosome"/>
</dbReference>
<dbReference type="GO" id="GO:0005737">
    <property type="term" value="C:cytoplasm"/>
    <property type="evidence" value="ECO:0007669"/>
    <property type="project" value="UniProtKB-ARBA"/>
</dbReference>
<dbReference type="GO" id="GO:0015935">
    <property type="term" value="C:small ribosomal subunit"/>
    <property type="evidence" value="ECO:0007669"/>
    <property type="project" value="TreeGrafter"/>
</dbReference>
<dbReference type="GO" id="GO:0003735">
    <property type="term" value="F:structural constituent of ribosome"/>
    <property type="evidence" value="ECO:0007669"/>
    <property type="project" value="InterPro"/>
</dbReference>
<dbReference type="GO" id="GO:0006412">
    <property type="term" value="P:translation"/>
    <property type="evidence" value="ECO:0007669"/>
    <property type="project" value="UniProtKB-UniRule"/>
</dbReference>
<dbReference type="FunFam" id="3.30.1320.10:FF:000002">
    <property type="entry name" value="30S ribosomal protein S16"/>
    <property type="match status" value="1"/>
</dbReference>
<dbReference type="Gene3D" id="3.30.1320.10">
    <property type="match status" value="1"/>
</dbReference>
<dbReference type="HAMAP" id="MF_00385">
    <property type="entry name" value="Ribosomal_bS16"/>
    <property type="match status" value="1"/>
</dbReference>
<dbReference type="InterPro" id="IPR000307">
    <property type="entry name" value="Ribosomal_bS16"/>
</dbReference>
<dbReference type="InterPro" id="IPR020592">
    <property type="entry name" value="Ribosomal_bS16_CS"/>
</dbReference>
<dbReference type="InterPro" id="IPR023803">
    <property type="entry name" value="Ribosomal_bS16_dom_sf"/>
</dbReference>
<dbReference type="NCBIfam" id="TIGR00002">
    <property type="entry name" value="S16"/>
    <property type="match status" value="1"/>
</dbReference>
<dbReference type="PANTHER" id="PTHR12919">
    <property type="entry name" value="30S RIBOSOMAL PROTEIN S16"/>
    <property type="match status" value="1"/>
</dbReference>
<dbReference type="PANTHER" id="PTHR12919:SF20">
    <property type="entry name" value="SMALL RIBOSOMAL SUBUNIT PROTEIN BS16M"/>
    <property type="match status" value="1"/>
</dbReference>
<dbReference type="Pfam" id="PF00886">
    <property type="entry name" value="Ribosomal_S16"/>
    <property type="match status" value="1"/>
</dbReference>
<dbReference type="SUPFAM" id="SSF54565">
    <property type="entry name" value="Ribosomal protein S16"/>
    <property type="match status" value="1"/>
</dbReference>
<dbReference type="PROSITE" id="PS00732">
    <property type="entry name" value="RIBOSOMAL_S16"/>
    <property type="match status" value="1"/>
</dbReference>
<proteinExistence type="inferred from homology"/>
<protein>
    <recommendedName>
        <fullName evidence="1">Small ribosomal subunit protein bS16</fullName>
    </recommendedName>
    <alternativeName>
        <fullName evidence="2">30S ribosomal protein S16</fullName>
    </alternativeName>
</protein>
<organism>
    <name type="scientific">Bacillus licheniformis (strain ATCC 14580 / DSM 13 / JCM 2505 / CCUG 7422 / NBRC 12200 / NCIMB 9375 / NCTC 10341 / NRRL NRS-1264 / Gibson 46)</name>
    <dbReference type="NCBI Taxonomy" id="279010"/>
    <lineage>
        <taxon>Bacteria</taxon>
        <taxon>Bacillati</taxon>
        <taxon>Bacillota</taxon>
        <taxon>Bacilli</taxon>
        <taxon>Bacillales</taxon>
        <taxon>Bacillaceae</taxon>
        <taxon>Bacillus</taxon>
    </lineage>
</organism>
<gene>
    <name evidence="1" type="primary">rpsP</name>
    <name type="ordered locus">BLi01819</name>
    <name type="ordered locus">BL02323</name>
</gene>
<accession>Q65JQ0</accession>
<accession>Q62V55</accession>
<name>RS16_BACLD</name>
<comment type="similarity">
    <text evidence="1">Belongs to the bacterial ribosomal protein bS16 family.</text>
</comment>
<keyword id="KW-1185">Reference proteome</keyword>
<keyword id="KW-0687">Ribonucleoprotein</keyword>
<keyword id="KW-0689">Ribosomal protein</keyword>
<evidence type="ECO:0000255" key="1">
    <source>
        <dbReference type="HAMAP-Rule" id="MF_00385"/>
    </source>
</evidence>
<evidence type="ECO:0000305" key="2"/>
<feature type="chain" id="PRO_0000243774" description="Small ribosomal subunit protein bS16">
    <location>
        <begin position="1"/>
        <end position="90"/>
    </location>
</feature>